<keyword id="KW-0067">ATP-binding</keyword>
<keyword id="KW-0418">Kinase</keyword>
<keyword id="KW-0545">Nucleotide biosynthesis</keyword>
<keyword id="KW-0547">Nucleotide-binding</keyword>
<keyword id="KW-0808">Transferase</keyword>
<proteinExistence type="inferred from homology"/>
<organism>
    <name type="scientific">Prochlorococcus marinus (strain AS9601)</name>
    <dbReference type="NCBI Taxonomy" id="146891"/>
    <lineage>
        <taxon>Bacteria</taxon>
        <taxon>Bacillati</taxon>
        <taxon>Cyanobacteriota</taxon>
        <taxon>Cyanophyceae</taxon>
        <taxon>Synechococcales</taxon>
        <taxon>Prochlorococcaceae</taxon>
        <taxon>Prochlorococcus</taxon>
    </lineage>
</organism>
<sequence length="212" mass="23751">MKGKFIVIEGIDGCGKTTQIDELSKWLPNSGLIKKGSKLITTREPGGSLLGKKLRGLILDNNKNNKPSSLAELLLYSADRAEHVSKIISPALNNNDWVISDRFSDSTLAYQGYGRNINLEIIKNIESIVCQGASPDLTFFLEISPEESIFRRKNEIPDRIESEGIRFLEKVNEGFKLIAKQKNWKVISASQNIQTISNQIKETLLNNFSNNK</sequence>
<accession>A2BNS4</accession>
<protein>
    <recommendedName>
        <fullName evidence="1">Thymidylate kinase</fullName>
        <ecNumber evidence="1">2.7.4.9</ecNumber>
    </recommendedName>
    <alternativeName>
        <fullName evidence="1">dTMP kinase</fullName>
    </alternativeName>
</protein>
<comment type="function">
    <text evidence="1">Phosphorylation of dTMP to form dTDP in both de novo and salvage pathways of dTTP synthesis.</text>
</comment>
<comment type="catalytic activity">
    <reaction evidence="1">
        <text>dTMP + ATP = dTDP + ADP</text>
        <dbReference type="Rhea" id="RHEA:13517"/>
        <dbReference type="ChEBI" id="CHEBI:30616"/>
        <dbReference type="ChEBI" id="CHEBI:58369"/>
        <dbReference type="ChEBI" id="CHEBI:63528"/>
        <dbReference type="ChEBI" id="CHEBI:456216"/>
        <dbReference type="EC" id="2.7.4.9"/>
    </reaction>
</comment>
<comment type="similarity">
    <text evidence="1">Belongs to the thymidylate kinase family.</text>
</comment>
<feature type="chain" id="PRO_1000023250" description="Thymidylate kinase">
    <location>
        <begin position="1"/>
        <end position="212"/>
    </location>
</feature>
<feature type="binding site" evidence="1">
    <location>
        <begin position="10"/>
        <end position="17"/>
    </location>
    <ligand>
        <name>ATP</name>
        <dbReference type="ChEBI" id="CHEBI:30616"/>
    </ligand>
</feature>
<dbReference type="EC" id="2.7.4.9" evidence="1"/>
<dbReference type="EMBL" id="CP000551">
    <property type="protein sequence ID" value="ABM69435.1"/>
    <property type="molecule type" value="Genomic_DNA"/>
</dbReference>
<dbReference type="RefSeq" id="WP_011817622.1">
    <property type="nucleotide sequence ID" value="NC_008816.1"/>
</dbReference>
<dbReference type="SMR" id="A2BNS4"/>
<dbReference type="STRING" id="146891.A9601_01471"/>
<dbReference type="KEGG" id="pmb:A9601_01471"/>
<dbReference type="eggNOG" id="COG0125">
    <property type="taxonomic scope" value="Bacteria"/>
</dbReference>
<dbReference type="HOGENOM" id="CLU_049131_0_2_3"/>
<dbReference type="OrthoDB" id="9774907at2"/>
<dbReference type="Proteomes" id="UP000002590">
    <property type="component" value="Chromosome"/>
</dbReference>
<dbReference type="GO" id="GO:0005829">
    <property type="term" value="C:cytosol"/>
    <property type="evidence" value="ECO:0007669"/>
    <property type="project" value="TreeGrafter"/>
</dbReference>
<dbReference type="GO" id="GO:0005524">
    <property type="term" value="F:ATP binding"/>
    <property type="evidence" value="ECO:0007669"/>
    <property type="project" value="UniProtKB-UniRule"/>
</dbReference>
<dbReference type="GO" id="GO:0004798">
    <property type="term" value="F:dTMP kinase activity"/>
    <property type="evidence" value="ECO:0007669"/>
    <property type="project" value="UniProtKB-UniRule"/>
</dbReference>
<dbReference type="GO" id="GO:0006233">
    <property type="term" value="P:dTDP biosynthetic process"/>
    <property type="evidence" value="ECO:0007669"/>
    <property type="project" value="InterPro"/>
</dbReference>
<dbReference type="GO" id="GO:0006235">
    <property type="term" value="P:dTTP biosynthetic process"/>
    <property type="evidence" value="ECO:0007669"/>
    <property type="project" value="UniProtKB-UniRule"/>
</dbReference>
<dbReference type="GO" id="GO:0006227">
    <property type="term" value="P:dUDP biosynthetic process"/>
    <property type="evidence" value="ECO:0007669"/>
    <property type="project" value="TreeGrafter"/>
</dbReference>
<dbReference type="CDD" id="cd01672">
    <property type="entry name" value="TMPK"/>
    <property type="match status" value="1"/>
</dbReference>
<dbReference type="FunFam" id="3.40.50.300:FF:000225">
    <property type="entry name" value="Thymidylate kinase"/>
    <property type="match status" value="1"/>
</dbReference>
<dbReference type="Gene3D" id="3.40.50.300">
    <property type="entry name" value="P-loop containing nucleotide triphosphate hydrolases"/>
    <property type="match status" value="1"/>
</dbReference>
<dbReference type="HAMAP" id="MF_00165">
    <property type="entry name" value="Thymidylate_kinase"/>
    <property type="match status" value="1"/>
</dbReference>
<dbReference type="InterPro" id="IPR027417">
    <property type="entry name" value="P-loop_NTPase"/>
</dbReference>
<dbReference type="InterPro" id="IPR039430">
    <property type="entry name" value="Thymidylate_kin-like_dom"/>
</dbReference>
<dbReference type="InterPro" id="IPR018095">
    <property type="entry name" value="Thymidylate_kin_CS"/>
</dbReference>
<dbReference type="InterPro" id="IPR018094">
    <property type="entry name" value="Thymidylate_kinase"/>
</dbReference>
<dbReference type="NCBIfam" id="TIGR00041">
    <property type="entry name" value="DTMP_kinase"/>
    <property type="match status" value="1"/>
</dbReference>
<dbReference type="PANTHER" id="PTHR10344">
    <property type="entry name" value="THYMIDYLATE KINASE"/>
    <property type="match status" value="1"/>
</dbReference>
<dbReference type="PANTHER" id="PTHR10344:SF4">
    <property type="entry name" value="UMP-CMP KINASE 2, MITOCHONDRIAL"/>
    <property type="match status" value="1"/>
</dbReference>
<dbReference type="Pfam" id="PF02223">
    <property type="entry name" value="Thymidylate_kin"/>
    <property type="match status" value="1"/>
</dbReference>
<dbReference type="SUPFAM" id="SSF52540">
    <property type="entry name" value="P-loop containing nucleoside triphosphate hydrolases"/>
    <property type="match status" value="1"/>
</dbReference>
<dbReference type="PROSITE" id="PS01331">
    <property type="entry name" value="THYMIDYLATE_KINASE"/>
    <property type="match status" value="1"/>
</dbReference>
<reference key="1">
    <citation type="journal article" date="2007" name="PLoS Genet.">
        <title>Patterns and implications of gene gain and loss in the evolution of Prochlorococcus.</title>
        <authorList>
            <person name="Kettler G.C."/>
            <person name="Martiny A.C."/>
            <person name="Huang K."/>
            <person name="Zucker J."/>
            <person name="Coleman M.L."/>
            <person name="Rodrigue S."/>
            <person name="Chen F."/>
            <person name="Lapidus A."/>
            <person name="Ferriera S."/>
            <person name="Johnson J."/>
            <person name="Steglich C."/>
            <person name="Church G.M."/>
            <person name="Richardson P."/>
            <person name="Chisholm S.W."/>
        </authorList>
    </citation>
    <scope>NUCLEOTIDE SEQUENCE [LARGE SCALE GENOMIC DNA]</scope>
    <source>
        <strain>AS9601</strain>
    </source>
</reference>
<gene>
    <name evidence="1" type="primary">tmk</name>
    <name type="ordered locus">A9601_01471</name>
</gene>
<evidence type="ECO:0000255" key="1">
    <source>
        <dbReference type="HAMAP-Rule" id="MF_00165"/>
    </source>
</evidence>
<name>KTHY_PROMS</name>